<sequence length="99" mass="11340">MMMNSFFPAMALMVLVGCSTPSPVQKAQRVKVDPLRSLNMEALCKDQAAKRYNTGEQKIDVTAFEQFQGSYEMRGYTFRKEQFVCSFDADGHFLHLSMR</sequence>
<protein>
    <recommendedName>
        <fullName>Uncharacterized lipoprotein YsaB</fullName>
    </recommendedName>
</protein>
<reference key="1">
    <citation type="journal article" date="2001" name="Nature">
        <title>Genome sequence of enterohaemorrhagic Escherichia coli O157:H7.</title>
        <authorList>
            <person name="Perna N.T."/>
            <person name="Plunkett G. III"/>
            <person name="Burland V."/>
            <person name="Mau B."/>
            <person name="Glasner J.D."/>
            <person name="Rose D.J."/>
            <person name="Mayhew G.F."/>
            <person name="Evans P.S."/>
            <person name="Gregor J."/>
            <person name="Kirkpatrick H.A."/>
            <person name="Posfai G."/>
            <person name="Hackett J."/>
            <person name="Klink S."/>
            <person name="Boutin A."/>
            <person name="Shao Y."/>
            <person name="Miller L."/>
            <person name="Grotbeck E.J."/>
            <person name="Davis N.W."/>
            <person name="Lim A."/>
            <person name="Dimalanta E.T."/>
            <person name="Potamousis K."/>
            <person name="Apodaca J."/>
            <person name="Anantharaman T.S."/>
            <person name="Lin J."/>
            <person name="Yen G."/>
            <person name="Schwartz D.C."/>
            <person name="Welch R.A."/>
            <person name="Blattner F.R."/>
        </authorList>
    </citation>
    <scope>NUCLEOTIDE SEQUENCE [LARGE SCALE GENOMIC DNA]</scope>
    <source>
        <strain>O157:H7 / EDL933 / ATCC 700927 / EHEC</strain>
    </source>
</reference>
<reference key="2">
    <citation type="journal article" date="2001" name="DNA Res.">
        <title>Complete genome sequence of enterohemorrhagic Escherichia coli O157:H7 and genomic comparison with a laboratory strain K-12.</title>
        <authorList>
            <person name="Hayashi T."/>
            <person name="Makino K."/>
            <person name="Ohnishi M."/>
            <person name="Kurokawa K."/>
            <person name="Ishii K."/>
            <person name="Yokoyama K."/>
            <person name="Han C.-G."/>
            <person name="Ohtsubo E."/>
            <person name="Nakayama K."/>
            <person name="Murata T."/>
            <person name="Tanaka M."/>
            <person name="Tobe T."/>
            <person name="Iida T."/>
            <person name="Takami H."/>
            <person name="Honda T."/>
            <person name="Sasakawa C."/>
            <person name="Ogasawara N."/>
            <person name="Yasunaga T."/>
            <person name="Kuhara S."/>
            <person name="Shiba T."/>
            <person name="Hattori M."/>
            <person name="Shinagawa H."/>
        </authorList>
    </citation>
    <scope>NUCLEOTIDE SEQUENCE [LARGE SCALE GENOMIC DNA]</scope>
    <source>
        <strain>O157:H7 / Sakai / RIMD 0509952 / EHEC</strain>
    </source>
</reference>
<comment type="subcellular location">
    <subcellularLocation>
        <location evidence="2">Cell membrane</location>
        <topology evidence="2">Lipid-anchor</topology>
    </subcellularLocation>
</comment>
<proteinExistence type="inferred from homology"/>
<gene>
    <name type="primary">ysaB</name>
    <name type="ordered locus">Z4985</name>
    <name type="ordered locus">ECs4443.1</name>
</gene>
<dbReference type="EMBL" id="AE005174">
    <property type="protein sequence ID" value="AAG58709.1"/>
    <property type="molecule type" value="Genomic_DNA"/>
</dbReference>
<dbReference type="EMBL" id="BA000007">
    <property type="status" value="NOT_ANNOTATED_CDS"/>
    <property type="molecule type" value="Genomic_DNA"/>
</dbReference>
<dbReference type="PIR" id="A86031">
    <property type="entry name" value="A86031"/>
</dbReference>
<dbReference type="RefSeq" id="WP_000980160.1">
    <property type="nucleotide sequence ID" value="NZ_VOAI01000004.1"/>
</dbReference>
<dbReference type="STRING" id="155864.Z4985"/>
<dbReference type="KEGG" id="ece:Z4985"/>
<dbReference type="PATRIC" id="fig|83334.175.peg.4019"/>
<dbReference type="eggNOG" id="ENOG5032T4W">
    <property type="taxonomic scope" value="Bacteria"/>
</dbReference>
<dbReference type="OMA" id="FICSFDP"/>
<dbReference type="Proteomes" id="UP000000558">
    <property type="component" value="Chromosome"/>
</dbReference>
<dbReference type="Proteomes" id="UP000002519">
    <property type="component" value="Chromosome"/>
</dbReference>
<dbReference type="GO" id="GO:0005886">
    <property type="term" value="C:plasma membrane"/>
    <property type="evidence" value="ECO:0007669"/>
    <property type="project" value="UniProtKB-SubCell"/>
</dbReference>
<dbReference type="InterPro" id="IPR025728">
    <property type="entry name" value="YsaB-like"/>
</dbReference>
<dbReference type="Pfam" id="PF13983">
    <property type="entry name" value="YsaB"/>
    <property type="match status" value="1"/>
</dbReference>
<name>YSAB_ECO57</name>
<evidence type="ECO:0000255" key="1"/>
<evidence type="ECO:0000305" key="2"/>
<accession>Q8X4J1</accession>
<keyword id="KW-1003">Cell membrane</keyword>
<keyword id="KW-0449">Lipoprotein</keyword>
<keyword id="KW-0472">Membrane</keyword>
<keyword id="KW-0564">Palmitate</keyword>
<keyword id="KW-1185">Reference proteome</keyword>
<keyword id="KW-0732">Signal</keyword>
<organism>
    <name type="scientific">Escherichia coli O157:H7</name>
    <dbReference type="NCBI Taxonomy" id="83334"/>
    <lineage>
        <taxon>Bacteria</taxon>
        <taxon>Pseudomonadati</taxon>
        <taxon>Pseudomonadota</taxon>
        <taxon>Gammaproteobacteria</taxon>
        <taxon>Enterobacterales</taxon>
        <taxon>Enterobacteriaceae</taxon>
        <taxon>Escherichia</taxon>
    </lineage>
</organism>
<feature type="signal peptide" evidence="1">
    <location>
        <begin position="1"/>
        <end position="17"/>
    </location>
</feature>
<feature type="chain" id="PRO_0000268610" description="Uncharacterized lipoprotein YsaB">
    <location>
        <begin position="18"/>
        <end position="99"/>
    </location>
</feature>
<feature type="lipid moiety-binding region" description="N-palmitoyl cysteine" evidence="1">
    <location>
        <position position="18"/>
    </location>
</feature>
<feature type="lipid moiety-binding region" description="S-diacylglycerol cysteine" evidence="1">
    <location>
        <position position="18"/>
    </location>
</feature>